<proteinExistence type="inferred from homology"/>
<organism>
    <name type="scientific">Staphylococcus aureus (strain Newman)</name>
    <dbReference type="NCBI Taxonomy" id="426430"/>
    <lineage>
        <taxon>Bacteria</taxon>
        <taxon>Bacillati</taxon>
        <taxon>Bacillota</taxon>
        <taxon>Bacilli</taxon>
        <taxon>Bacillales</taxon>
        <taxon>Staphylococcaceae</taxon>
        <taxon>Staphylococcus</taxon>
    </lineage>
</organism>
<gene>
    <name evidence="1" type="primary">mnmE</name>
    <name evidence="1" type="synonym">trmE</name>
    <name type="ordered locus">NWMN_2612</name>
</gene>
<dbReference type="EC" id="3.6.-.-" evidence="1"/>
<dbReference type="EMBL" id="AP009351">
    <property type="protein sequence ID" value="BAF68884.1"/>
    <property type="molecule type" value="Genomic_DNA"/>
</dbReference>
<dbReference type="RefSeq" id="WP_000362503.1">
    <property type="nucleotide sequence ID" value="NZ_JBBIAE010000007.1"/>
</dbReference>
<dbReference type="SMR" id="A6QKK2"/>
<dbReference type="KEGG" id="sae:NWMN_2612"/>
<dbReference type="HOGENOM" id="CLU_019624_4_1_9"/>
<dbReference type="Proteomes" id="UP000006386">
    <property type="component" value="Chromosome"/>
</dbReference>
<dbReference type="GO" id="GO:0005829">
    <property type="term" value="C:cytosol"/>
    <property type="evidence" value="ECO:0007669"/>
    <property type="project" value="TreeGrafter"/>
</dbReference>
<dbReference type="GO" id="GO:0005525">
    <property type="term" value="F:GTP binding"/>
    <property type="evidence" value="ECO:0007669"/>
    <property type="project" value="UniProtKB-UniRule"/>
</dbReference>
<dbReference type="GO" id="GO:0003924">
    <property type="term" value="F:GTPase activity"/>
    <property type="evidence" value="ECO:0007669"/>
    <property type="project" value="UniProtKB-UniRule"/>
</dbReference>
<dbReference type="GO" id="GO:0046872">
    <property type="term" value="F:metal ion binding"/>
    <property type="evidence" value="ECO:0007669"/>
    <property type="project" value="UniProtKB-KW"/>
</dbReference>
<dbReference type="GO" id="GO:0030488">
    <property type="term" value="P:tRNA methylation"/>
    <property type="evidence" value="ECO:0007669"/>
    <property type="project" value="TreeGrafter"/>
</dbReference>
<dbReference type="GO" id="GO:0002098">
    <property type="term" value="P:tRNA wobble uridine modification"/>
    <property type="evidence" value="ECO:0007669"/>
    <property type="project" value="TreeGrafter"/>
</dbReference>
<dbReference type="CDD" id="cd04164">
    <property type="entry name" value="trmE"/>
    <property type="match status" value="1"/>
</dbReference>
<dbReference type="CDD" id="cd14858">
    <property type="entry name" value="TrmE_N"/>
    <property type="match status" value="1"/>
</dbReference>
<dbReference type="FunFam" id="3.30.1360.120:FF:000003">
    <property type="entry name" value="tRNA modification GTPase MnmE"/>
    <property type="match status" value="1"/>
</dbReference>
<dbReference type="FunFam" id="3.40.50.300:FF:000494">
    <property type="entry name" value="tRNA modification GTPase MnmE"/>
    <property type="match status" value="1"/>
</dbReference>
<dbReference type="Gene3D" id="3.40.50.300">
    <property type="entry name" value="P-loop containing nucleotide triphosphate hydrolases"/>
    <property type="match status" value="1"/>
</dbReference>
<dbReference type="Gene3D" id="3.30.1360.120">
    <property type="entry name" value="Probable tRNA modification gtpase trme, domain 1"/>
    <property type="match status" value="1"/>
</dbReference>
<dbReference type="Gene3D" id="1.20.120.430">
    <property type="entry name" value="tRNA modification GTPase MnmE domain 2"/>
    <property type="match status" value="1"/>
</dbReference>
<dbReference type="HAMAP" id="MF_00379">
    <property type="entry name" value="GTPase_MnmE"/>
    <property type="match status" value="1"/>
</dbReference>
<dbReference type="InterPro" id="IPR031168">
    <property type="entry name" value="G_TrmE"/>
</dbReference>
<dbReference type="InterPro" id="IPR006073">
    <property type="entry name" value="GTP-bd"/>
</dbReference>
<dbReference type="InterPro" id="IPR018948">
    <property type="entry name" value="GTP-bd_TrmE_N"/>
</dbReference>
<dbReference type="InterPro" id="IPR004520">
    <property type="entry name" value="GTPase_MnmE"/>
</dbReference>
<dbReference type="InterPro" id="IPR027368">
    <property type="entry name" value="MnmE_dom2"/>
</dbReference>
<dbReference type="InterPro" id="IPR025867">
    <property type="entry name" value="MnmE_helical"/>
</dbReference>
<dbReference type="InterPro" id="IPR027417">
    <property type="entry name" value="P-loop_NTPase"/>
</dbReference>
<dbReference type="InterPro" id="IPR005225">
    <property type="entry name" value="Small_GTP-bd"/>
</dbReference>
<dbReference type="InterPro" id="IPR027266">
    <property type="entry name" value="TrmE/GcvT_dom1"/>
</dbReference>
<dbReference type="NCBIfam" id="TIGR00450">
    <property type="entry name" value="mnmE_trmE_thdF"/>
    <property type="match status" value="1"/>
</dbReference>
<dbReference type="NCBIfam" id="NF003661">
    <property type="entry name" value="PRK05291.1-3"/>
    <property type="match status" value="1"/>
</dbReference>
<dbReference type="NCBIfam" id="TIGR00231">
    <property type="entry name" value="small_GTP"/>
    <property type="match status" value="1"/>
</dbReference>
<dbReference type="PANTHER" id="PTHR42714">
    <property type="entry name" value="TRNA MODIFICATION GTPASE GTPBP3"/>
    <property type="match status" value="1"/>
</dbReference>
<dbReference type="PANTHER" id="PTHR42714:SF2">
    <property type="entry name" value="TRNA MODIFICATION GTPASE GTPBP3, MITOCHONDRIAL"/>
    <property type="match status" value="1"/>
</dbReference>
<dbReference type="Pfam" id="PF01926">
    <property type="entry name" value="MMR_HSR1"/>
    <property type="match status" value="1"/>
</dbReference>
<dbReference type="Pfam" id="PF12631">
    <property type="entry name" value="MnmE_helical"/>
    <property type="match status" value="1"/>
</dbReference>
<dbReference type="Pfam" id="PF10396">
    <property type="entry name" value="TrmE_N"/>
    <property type="match status" value="1"/>
</dbReference>
<dbReference type="PRINTS" id="PR00449">
    <property type="entry name" value="RASTRNSFRMNG"/>
</dbReference>
<dbReference type="SUPFAM" id="SSF52540">
    <property type="entry name" value="P-loop containing nucleoside triphosphate hydrolases"/>
    <property type="match status" value="1"/>
</dbReference>
<dbReference type="SUPFAM" id="SSF116878">
    <property type="entry name" value="TrmE connector domain"/>
    <property type="match status" value="1"/>
</dbReference>
<dbReference type="PROSITE" id="PS51709">
    <property type="entry name" value="G_TRME"/>
    <property type="match status" value="1"/>
</dbReference>
<feature type="chain" id="PRO_1000072169" description="tRNA modification GTPase MnmE">
    <location>
        <begin position="1"/>
        <end position="459"/>
    </location>
</feature>
<feature type="domain" description="TrmE-type G">
    <location>
        <begin position="221"/>
        <end position="380"/>
    </location>
</feature>
<feature type="binding site" evidence="1">
    <location>
        <position position="22"/>
    </location>
    <ligand>
        <name>(6S)-5-formyl-5,6,7,8-tetrahydrofolate</name>
        <dbReference type="ChEBI" id="CHEBI:57457"/>
    </ligand>
</feature>
<feature type="binding site" evidence="1">
    <location>
        <position position="85"/>
    </location>
    <ligand>
        <name>(6S)-5-formyl-5,6,7,8-tetrahydrofolate</name>
        <dbReference type="ChEBI" id="CHEBI:57457"/>
    </ligand>
</feature>
<feature type="binding site" evidence="1">
    <location>
        <position position="124"/>
    </location>
    <ligand>
        <name>(6S)-5-formyl-5,6,7,8-tetrahydrofolate</name>
        <dbReference type="ChEBI" id="CHEBI:57457"/>
    </ligand>
</feature>
<feature type="binding site" evidence="1">
    <location>
        <begin position="231"/>
        <end position="236"/>
    </location>
    <ligand>
        <name>GTP</name>
        <dbReference type="ChEBI" id="CHEBI:37565"/>
    </ligand>
</feature>
<feature type="binding site" evidence="1">
    <location>
        <position position="231"/>
    </location>
    <ligand>
        <name>K(+)</name>
        <dbReference type="ChEBI" id="CHEBI:29103"/>
    </ligand>
</feature>
<feature type="binding site" evidence="1">
    <location>
        <position position="235"/>
    </location>
    <ligand>
        <name>Mg(2+)</name>
        <dbReference type="ChEBI" id="CHEBI:18420"/>
    </ligand>
</feature>
<feature type="binding site" evidence="1">
    <location>
        <begin position="250"/>
        <end position="256"/>
    </location>
    <ligand>
        <name>GTP</name>
        <dbReference type="ChEBI" id="CHEBI:37565"/>
    </ligand>
</feature>
<feature type="binding site" evidence="1">
    <location>
        <position position="250"/>
    </location>
    <ligand>
        <name>K(+)</name>
        <dbReference type="ChEBI" id="CHEBI:29103"/>
    </ligand>
</feature>
<feature type="binding site" evidence="1">
    <location>
        <position position="252"/>
    </location>
    <ligand>
        <name>K(+)</name>
        <dbReference type="ChEBI" id="CHEBI:29103"/>
    </ligand>
</feature>
<feature type="binding site" evidence="1">
    <location>
        <position position="255"/>
    </location>
    <ligand>
        <name>K(+)</name>
        <dbReference type="ChEBI" id="CHEBI:29103"/>
    </ligand>
</feature>
<feature type="binding site" evidence="1">
    <location>
        <position position="256"/>
    </location>
    <ligand>
        <name>Mg(2+)</name>
        <dbReference type="ChEBI" id="CHEBI:18420"/>
    </ligand>
</feature>
<feature type="binding site" evidence="1">
    <location>
        <begin position="275"/>
        <end position="278"/>
    </location>
    <ligand>
        <name>GTP</name>
        <dbReference type="ChEBI" id="CHEBI:37565"/>
    </ligand>
</feature>
<feature type="binding site" evidence="1">
    <location>
        <position position="459"/>
    </location>
    <ligand>
        <name>(6S)-5-formyl-5,6,7,8-tetrahydrofolate</name>
        <dbReference type="ChEBI" id="CHEBI:57457"/>
    </ligand>
</feature>
<reference key="1">
    <citation type="journal article" date="2008" name="J. Bacteriol.">
        <title>Genome sequence of Staphylococcus aureus strain Newman and comparative analysis of staphylococcal genomes: polymorphism and evolution of two major pathogenicity islands.</title>
        <authorList>
            <person name="Baba T."/>
            <person name="Bae T."/>
            <person name="Schneewind O."/>
            <person name="Takeuchi F."/>
            <person name="Hiramatsu K."/>
        </authorList>
    </citation>
    <scope>NUCLEOTIDE SEQUENCE [LARGE SCALE GENOMIC DNA]</scope>
    <source>
        <strain>Newman</strain>
    </source>
</reference>
<keyword id="KW-0963">Cytoplasm</keyword>
<keyword id="KW-0342">GTP-binding</keyword>
<keyword id="KW-0378">Hydrolase</keyword>
<keyword id="KW-0460">Magnesium</keyword>
<keyword id="KW-0479">Metal-binding</keyword>
<keyword id="KW-0547">Nucleotide-binding</keyword>
<keyword id="KW-0630">Potassium</keyword>
<keyword id="KW-0819">tRNA processing</keyword>
<name>MNME_STAAE</name>
<accession>A6QKK2</accession>
<evidence type="ECO:0000255" key="1">
    <source>
        <dbReference type="HAMAP-Rule" id="MF_00379"/>
    </source>
</evidence>
<comment type="function">
    <text evidence="1">Exhibits a very high intrinsic GTPase hydrolysis rate. Involved in the addition of a carboxymethylaminomethyl (cmnm) group at the wobble position (U34) of certain tRNAs, forming tRNA-cmnm(5)s(2)U34.</text>
</comment>
<comment type="cofactor">
    <cofactor evidence="1">
        <name>K(+)</name>
        <dbReference type="ChEBI" id="CHEBI:29103"/>
    </cofactor>
    <text evidence="1">Binds 1 potassium ion per subunit.</text>
</comment>
<comment type="subunit">
    <text evidence="1">Homodimer. Heterotetramer of two MnmE and two MnmG subunits.</text>
</comment>
<comment type="subcellular location">
    <subcellularLocation>
        <location evidence="1">Cytoplasm</location>
    </subcellularLocation>
</comment>
<comment type="similarity">
    <text evidence="1">Belongs to the TRAFAC class TrmE-Era-EngA-EngB-Septin-like GTPase superfamily. TrmE GTPase family.</text>
</comment>
<protein>
    <recommendedName>
        <fullName evidence="1">tRNA modification GTPase MnmE</fullName>
        <ecNumber evidence="1">3.6.-.-</ecNumber>
    </recommendedName>
</protein>
<sequence>MDLDTITSISTPMGEGAIGIVRLSGPQAVEIADKLYKGKHLLNDVPSHTINYGHIIDPESKEVIEEVMVSVLRAPKTFTREDIIEINCHGGILTINRVLELTMTYGARMAEPGEFTKRAFLNGRIDLSQAEAVMDFIRSKTDRASKVAMNQIEGRLSDLIKKQRQSILEILAQVEVNIDYPEYDDVEDATTEFLLEQSKEIKQEINRLLDTGAQGKIMREGLSTVIVGKPNVGKSSMLNNLIQDNKAIVTEVAGTTRDVLEEYVNVRGVPLRLVDTAGIRETEDIVEKIGVERSRKALSQADLILFVLNNNEALTQEDYTLYEVVKNEDVIVIVNKMDLEQNIDINEVKDMIGDTPLIQTSMLKQEGIDELEIQIRDLFFGGEVQNQDMTYVSNSRHISLLKQARQTIQDAIDAAESGVPMDMVQIDLTRTWEILGEIIGETASDELIDQLFSQFCLGK</sequence>